<reference key="1">
    <citation type="journal article" date="2001" name="Nature">
        <title>Genome sequence of enterohaemorrhagic Escherichia coli O157:H7.</title>
        <authorList>
            <person name="Perna N.T."/>
            <person name="Plunkett G. III"/>
            <person name="Burland V."/>
            <person name="Mau B."/>
            <person name="Glasner J.D."/>
            <person name="Rose D.J."/>
            <person name="Mayhew G.F."/>
            <person name="Evans P.S."/>
            <person name="Gregor J."/>
            <person name="Kirkpatrick H.A."/>
            <person name="Posfai G."/>
            <person name="Hackett J."/>
            <person name="Klink S."/>
            <person name="Boutin A."/>
            <person name="Shao Y."/>
            <person name="Miller L."/>
            <person name="Grotbeck E.J."/>
            <person name="Davis N.W."/>
            <person name="Lim A."/>
            <person name="Dimalanta E.T."/>
            <person name="Potamousis K."/>
            <person name="Apodaca J."/>
            <person name="Anantharaman T.S."/>
            <person name="Lin J."/>
            <person name="Yen G."/>
            <person name="Schwartz D.C."/>
            <person name="Welch R.A."/>
            <person name="Blattner F.R."/>
        </authorList>
    </citation>
    <scope>NUCLEOTIDE SEQUENCE [LARGE SCALE GENOMIC DNA]</scope>
    <source>
        <strain>O157:H7 / EDL933 / ATCC 700927 / EHEC</strain>
    </source>
</reference>
<reference key="2">
    <citation type="journal article" date="2001" name="DNA Res.">
        <title>Complete genome sequence of enterohemorrhagic Escherichia coli O157:H7 and genomic comparison with a laboratory strain K-12.</title>
        <authorList>
            <person name="Hayashi T."/>
            <person name="Makino K."/>
            <person name="Ohnishi M."/>
            <person name="Kurokawa K."/>
            <person name="Ishii K."/>
            <person name="Yokoyama K."/>
            <person name="Han C.-G."/>
            <person name="Ohtsubo E."/>
            <person name="Nakayama K."/>
            <person name="Murata T."/>
            <person name="Tanaka M."/>
            <person name="Tobe T."/>
            <person name="Iida T."/>
            <person name="Takami H."/>
            <person name="Honda T."/>
            <person name="Sasakawa C."/>
            <person name="Ogasawara N."/>
            <person name="Yasunaga T."/>
            <person name="Kuhara S."/>
            <person name="Shiba T."/>
            <person name="Hattori M."/>
            <person name="Shinagawa H."/>
        </authorList>
    </citation>
    <scope>NUCLEOTIDE SEQUENCE [LARGE SCALE GENOMIC DNA]</scope>
    <source>
        <strain>O157:H7 / Sakai / RIMD 0509952 / EHEC</strain>
    </source>
</reference>
<comment type="function">
    <text evidence="1">Converts 2-succinyl-6-hydroxy-2,4-cyclohexadiene-1-carboxylate (SHCHC) to 2-succinylbenzoate (OSB).</text>
</comment>
<comment type="catalytic activity">
    <reaction evidence="1">
        <text>(1R,6R)-6-hydroxy-2-succinyl-cyclohexa-2,4-diene-1-carboxylate = 2-succinylbenzoate + H2O</text>
        <dbReference type="Rhea" id="RHEA:10196"/>
        <dbReference type="ChEBI" id="CHEBI:15377"/>
        <dbReference type="ChEBI" id="CHEBI:18325"/>
        <dbReference type="ChEBI" id="CHEBI:58689"/>
        <dbReference type="EC" id="4.2.1.113"/>
    </reaction>
</comment>
<comment type="cofactor">
    <cofactor evidence="1">
        <name>a divalent metal cation</name>
        <dbReference type="ChEBI" id="CHEBI:60240"/>
    </cofactor>
</comment>
<comment type="pathway">
    <text evidence="1">Quinol/quinone metabolism; 1,4-dihydroxy-2-naphthoate biosynthesis; 1,4-dihydroxy-2-naphthoate from chorismate: step 4/7.</text>
</comment>
<comment type="pathway">
    <text evidence="1">Quinol/quinone metabolism; menaquinone biosynthesis.</text>
</comment>
<comment type="similarity">
    <text evidence="1">Belongs to the mandelate racemase/muconate lactonizing enzyme family. MenC type 1 subfamily.</text>
</comment>
<organism>
    <name type="scientific">Escherichia coli O157:H7</name>
    <dbReference type="NCBI Taxonomy" id="83334"/>
    <lineage>
        <taxon>Bacteria</taxon>
        <taxon>Pseudomonadati</taxon>
        <taxon>Pseudomonadota</taxon>
        <taxon>Gammaproteobacteria</taxon>
        <taxon>Enterobacterales</taxon>
        <taxon>Enterobacteriaceae</taxon>
        <taxon>Escherichia</taxon>
    </lineage>
</organism>
<proteinExistence type="inferred from homology"/>
<evidence type="ECO:0000255" key="1">
    <source>
        <dbReference type="HAMAP-Rule" id="MF_00470"/>
    </source>
</evidence>
<gene>
    <name evidence="1" type="primary">menC</name>
    <name type="ordered locus">Z3521</name>
    <name type="ordered locus">ECs3149</name>
</gene>
<dbReference type="EC" id="4.2.1.113" evidence="1"/>
<dbReference type="EMBL" id="AE005174">
    <property type="protein sequence ID" value="AAG57394.1"/>
    <property type="molecule type" value="Genomic_DNA"/>
</dbReference>
<dbReference type="EMBL" id="BA000007">
    <property type="protein sequence ID" value="BAB36572.1"/>
    <property type="molecule type" value="Genomic_DNA"/>
</dbReference>
<dbReference type="PIR" id="E91022">
    <property type="entry name" value="E91022"/>
</dbReference>
<dbReference type="PIR" id="F85866">
    <property type="entry name" value="F85866"/>
</dbReference>
<dbReference type="RefSeq" id="NP_311176.1">
    <property type="nucleotide sequence ID" value="NC_002695.1"/>
</dbReference>
<dbReference type="RefSeq" id="WP_001255621.1">
    <property type="nucleotide sequence ID" value="NZ_VOAI01000001.1"/>
</dbReference>
<dbReference type="SMR" id="P58484"/>
<dbReference type="STRING" id="155864.Z3521"/>
<dbReference type="GeneID" id="916857"/>
<dbReference type="KEGG" id="ece:Z3521"/>
<dbReference type="KEGG" id="ecs:ECs_3149"/>
<dbReference type="PATRIC" id="fig|386585.9.peg.3286"/>
<dbReference type="eggNOG" id="COG1441">
    <property type="taxonomic scope" value="Bacteria"/>
</dbReference>
<dbReference type="HOGENOM" id="CLU_030273_0_1_6"/>
<dbReference type="OMA" id="PLCYGDP"/>
<dbReference type="UniPathway" id="UPA00079"/>
<dbReference type="UniPathway" id="UPA01057">
    <property type="reaction ID" value="UER00165"/>
</dbReference>
<dbReference type="Proteomes" id="UP000000558">
    <property type="component" value="Chromosome"/>
</dbReference>
<dbReference type="Proteomes" id="UP000002519">
    <property type="component" value="Chromosome"/>
</dbReference>
<dbReference type="GO" id="GO:0000287">
    <property type="term" value="F:magnesium ion binding"/>
    <property type="evidence" value="ECO:0007669"/>
    <property type="project" value="UniProtKB-UniRule"/>
</dbReference>
<dbReference type="GO" id="GO:0043748">
    <property type="term" value="F:O-succinylbenzoate synthase activity"/>
    <property type="evidence" value="ECO:0007669"/>
    <property type="project" value="UniProtKB-EC"/>
</dbReference>
<dbReference type="GO" id="GO:0009234">
    <property type="term" value="P:menaquinone biosynthetic process"/>
    <property type="evidence" value="ECO:0007669"/>
    <property type="project" value="UniProtKB-UniRule"/>
</dbReference>
<dbReference type="CDD" id="cd03320">
    <property type="entry name" value="OSBS"/>
    <property type="match status" value="1"/>
</dbReference>
<dbReference type="FunFam" id="3.20.20.120:FF:000006">
    <property type="entry name" value="o-succinylbenzoate synthase"/>
    <property type="match status" value="1"/>
</dbReference>
<dbReference type="FunFam" id="3.30.390.10:FF:000005">
    <property type="entry name" value="o-succinylbenzoate synthase"/>
    <property type="match status" value="1"/>
</dbReference>
<dbReference type="Gene3D" id="3.20.20.120">
    <property type="entry name" value="Enolase-like C-terminal domain"/>
    <property type="match status" value="1"/>
</dbReference>
<dbReference type="Gene3D" id="3.30.390.10">
    <property type="entry name" value="Enolase-like, N-terminal domain"/>
    <property type="match status" value="1"/>
</dbReference>
<dbReference type="HAMAP" id="MF_00470">
    <property type="entry name" value="MenC_1"/>
    <property type="match status" value="1"/>
</dbReference>
<dbReference type="InterPro" id="IPR036849">
    <property type="entry name" value="Enolase-like_C_sf"/>
</dbReference>
<dbReference type="InterPro" id="IPR029017">
    <property type="entry name" value="Enolase-like_N"/>
</dbReference>
<dbReference type="InterPro" id="IPR029065">
    <property type="entry name" value="Enolase_C-like"/>
</dbReference>
<dbReference type="InterPro" id="IPR013342">
    <property type="entry name" value="Mandelate_racemase_C"/>
</dbReference>
<dbReference type="InterPro" id="IPR010196">
    <property type="entry name" value="OSB_synthase_MenC1"/>
</dbReference>
<dbReference type="InterPro" id="IPR041338">
    <property type="entry name" value="OSBS_N"/>
</dbReference>
<dbReference type="NCBIfam" id="TIGR01927">
    <property type="entry name" value="menC_gam_Gplu"/>
    <property type="match status" value="1"/>
</dbReference>
<dbReference type="NCBIfam" id="NF003473">
    <property type="entry name" value="PRK05105.1"/>
    <property type="match status" value="1"/>
</dbReference>
<dbReference type="PANTHER" id="PTHR48073:SF2">
    <property type="entry name" value="O-SUCCINYLBENZOATE SYNTHASE"/>
    <property type="match status" value="1"/>
</dbReference>
<dbReference type="PANTHER" id="PTHR48073">
    <property type="entry name" value="O-SUCCINYLBENZOATE SYNTHASE-RELATED"/>
    <property type="match status" value="1"/>
</dbReference>
<dbReference type="Pfam" id="PF21508">
    <property type="entry name" value="MenC_N"/>
    <property type="match status" value="1"/>
</dbReference>
<dbReference type="Pfam" id="PF13378">
    <property type="entry name" value="MR_MLE_C"/>
    <property type="match status" value="1"/>
</dbReference>
<dbReference type="SFLD" id="SFLDS00001">
    <property type="entry name" value="Enolase"/>
    <property type="match status" value="1"/>
</dbReference>
<dbReference type="SFLD" id="SFLDF00009">
    <property type="entry name" value="o-succinylbenzoate_synthase"/>
    <property type="match status" value="1"/>
</dbReference>
<dbReference type="SMART" id="SM00922">
    <property type="entry name" value="MR_MLE"/>
    <property type="match status" value="1"/>
</dbReference>
<dbReference type="SUPFAM" id="SSF51604">
    <property type="entry name" value="Enolase C-terminal domain-like"/>
    <property type="match status" value="1"/>
</dbReference>
<dbReference type="SUPFAM" id="SSF54826">
    <property type="entry name" value="Enolase N-terminal domain-like"/>
    <property type="match status" value="1"/>
</dbReference>
<feature type="chain" id="PRO_0000171271" description="o-succinylbenzoate synthase">
    <location>
        <begin position="1"/>
        <end position="320"/>
    </location>
</feature>
<feature type="active site" description="Proton donor" evidence="1">
    <location>
        <position position="133"/>
    </location>
</feature>
<feature type="active site" description="Proton acceptor" evidence="1">
    <location>
        <position position="235"/>
    </location>
</feature>
<feature type="binding site" evidence="1">
    <location>
        <position position="161"/>
    </location>
    <ligand>
        <name>Mg(2+)</name>
        <dbReference type="ChEBI" id="CHEBI:18420"/>
    </ligand>
</feature>
<feature type="binding site" evidence="1">
    <location>
        <position position="190"/>
    </location>
    <ligand>
        <name>Mg(2+)</name>
        <dbReference type="ChEBI" id="CHEBI:18420"/>
    </ligand>
</feature>
<feature type="binding site" evidence="1">
    <location>
        <position position="213"/>
    </location>
    <ligand>
        <name>Mg(2+)</name>
        <dbReference type="ChEBI" id="CHEBI:18420"/>
    </ligand>
</feature>
<protein>
    <recommendedName>
        <fullName evidence="1">o-succinylbenzoate synthase</fullName>
        <shortName evidence="1">OSB synthase</shortName>
        <shortName evidence="1">OSBS</shortName>
        <ecNumber evidence="1">4.2.1.113</ecNumber>
    </recommendedName>
    <alternativeName>
        <fullName evidence="1">4-(2'-carboxyphenyl)-4-oxybutyric acid synthase</fullName>
    </alternativeName>
    <alternativeName>
        <fullName evidence="1">o-succinylbenzoic acid synthase</fullName>
    </alternativeName>
</protein>
<name>MENC_ECO57</name>
<keyword id="KW-0456">Lyase</keyword>
<keyword id="KW-0460">Magnesium</keyword>
<keyword id="KW-0474">Menaquinone biosynthesis</keyword>
<keyword id="KW-0479">Metal-binding</keyword>
<keyword id="KW-1185">Reference proteome</keyword>
<sequence length="320" mass="35499">MRSAQVYRWQIPMDAGVVLRDRRLKTRDGLYVCLREGEREGWGEISPLPGFSQETWEEAQSVLLAWVNNWLAGDCELPQMPSVAFGVSCALAELADTLPQAANYRTAPLCNGDPDDLILKLADMPGEKVAKVKVGLYEAVRDGMVVNLLLEAIPDLHLRLDANRAWTPLKGQQFAKYVNPDYRHRIAFLEEPCKTRDDSRAFARETGIAIAWDESLREPDFAFVAEEGVRAVVIKPTLTGSLEKVREQVQAAHALGLTAVISSSIESSLGLTQLARIAAWLTPDTIPGLDTLDLMQAQQVRRWPGSTLPVVEVDALERLL</sequence>
<accession>P58484</accession>